<comment type="subcellular location">
    <subcellularLocation>
        <location evidence="2">Cell membrane</location>
        <topology evidence="2">Multi-pass membrane protein</topology>
    </subcellularLocation>
</comment>
<comment type="similarity">
    <text evidence="2">To M.genitalium MG225.</text>
</comment>
<accession>P75462</accession>
<name>Y319_MYCPN</name>
<protein>
    <recommendedName>
        <fullName>Uncharacterized protein MG226 homolog</fullName>
    </recommendedName>
</protein>
<keyword id="KW-1003">Cell membrane</keyword>
<keyword id="KW-0472">Membrane</keyword>
<keyword id="KW-1185">Reference proteome</keyword>
<keyword id="KW-0812">Transmembrane</keyword>
<keyword id="KW-1133">Transmembrane helix</keyword>
<dbReference type="EMBL" id="U00089">
    <property type="protein sequence ID" value="AAB96165.1"/>
    <property type="molecule type" value="Genomic_DNA"/>
</dbReference>
<dbReference type="PIR" id="S73843">
    <property type="entry name" value="S73843"/>
</dbReference>
<dbReference type="RefSeq" id="NP_110007.1">
    <property type="nucleotide sequence ID" value="NC_000912.1"/>
</dbReference>
<dbReference type="RefSeq" id="WP_010874675.1">
    <property type="nucleotide sequence ID" value="NZ_OU342337.1"/>
</dbReference>
<dbReference type="STRING" id="272634.MPN_319"/>
<dbReference type="EnsemblBacteria" id="AAB96165">
    <property type="protein sequence ID" value="AAB96165"/>
    <property type="gene ID" value="MPN_319"/>
</dbReference>
<dbReference type="KEGG" id="mpn:MPN_319"/>
<dbReference type="PATRIC" id="fig|272634.6.peg.342"/>
<dbReference type="HOGENOM" id="CLU_601059_0_0_14"/>
<dbReference type="BioCyc" id="MPNE272634:G1GJ3-510-MONOMER"/>
<dbReference type="Proteomes" id="UP000000808">
    <property type="component" value="Chromosome"/>
</dbReference>
<dbReference type="GO" id="GO:0005886">
    <property type="term" value="C:plasma membrane"/>
    <property type="evidence" value="ECO:0007669"/>
    <property type="project" value="UniProtKB-SubCell"/>
</dbReference>
<dbReference type="GO" id="GO:0055085">
    <property type="term" value="P:transmembrane transport"/>
    <property type="evidence" value="ECO:0007669"/>
    <property type="project" value="InterPro"/>
</dbReference>
<dbReference type="Gene3D" id="1.20.1740.10">
    <property type="entry name" value="Amino acid/polyamine transporter I"/>
    <property type="match status" value="1"/>
</dbReference>
<dbReference type="InterPro" id="IPR004841">
    <property type="entry name" value="AA-permease/SLC12A_dom"/>
</dbReference>
<dbReference type="InterPro" id="IPR050367">
    <property type="entry name" value="APC_superfamily"/>
</dbReference>
<dbReference type="PANTHER" id="PTHR42770">
    <property type="entry name" value="AMINO ACID TRANSPORTER-RELATED"/>
    <property type="match status" value="1"/>
</dbReference>
<dbReference type="PANTHER" id="PTHR42770:SF18">
    <property type="entry name" value="ARGININE_AGMATINE ANTIPORTER"/>
    <property type="match status" value="1"/>
</dbReference>
<dbReference type="Pfam" id="PF00324">
    <property type="entry name" value="AA_permease"/>
    <property type="match status" value="1"/>
</dbReference>
<dbReference type="PIRSF" id="PIRSF006060">
    <property type="entry name" value="AA_transporter"/>
    <property type="match status" value="1"/>
</dbReference>
<organism>
    <name type="scientific">Mycoplasma pneumoniae (strain ATCC 29342 / M129 / Subtype 1)</name>
    <name type="common">Mycoplasmoides pneumoniae</name>
    <dbReference type="NCBI Taxonomy" id="272634"/>
    <lineage>
        <taxon>Bacteria</taxon>
        <taxon>Bacillati</taxon>
        <taxon>Mycoplasmatota</taxon>
        <taxon>Mycoplasmoidales</taxon>
        <taxon>Mycoplasmoidaceae</taxon>
        <taxon>Mycoplasmoides</taxon>
    </lineage>
</organism>
<gene>
    <name type="ordered locus">MPN_319</name>
    <name type="ORF">F10_orf503</name>
    <name type="ORF">MP517</name>
</gene>
<feature type="chain" id="PRO_0000210470" description="Uncharacterized protein MG226 homolog">
    <location>
        <begin position="1"/>
        <end position="503"/>
    </location>
</feature>
<feature type="transmembrane region" description="Helical" evidence="1">
    <location>
        <begin position="20"/>
        <end position="40"/>
    </location>
</feature>
<feature type="transmembrane region" description="Helical" evidence="1">
    <location>
        <begin position="43"/>
        <end position="63"/>
    </location>
</feature>
<feature type="transmembrane region" description="Helical" evidence="1">
    <location>
        <begin position="106"/>
        <end position="126"/>
    </location>
</feature>
<feature type="transmembrane region" description="Helical" evidence="1">
    <location>
        <begin position="138"/>
        <end position="158"/>
    </location>
</feature>
<feature type="transmembrane region" description="Helical" evidence="1">
    <location>
        <begin position="166"/>
        <end position="186"/>
    </location>
</feature>
<feature type="transmembrane region" description="Helical" evidence="1">
    <location>
        <begin position="215"/>
        <end position="235"/>
    </location>
</feature>
<feature type="transmembrane region" description="Helical" evidence="1">
    <location>
        <begin position="249"/>
        <end position="269"/>
    </location>
</feature>
<feature type="transmembrane region" description="Helical" evidence="1">
    <location>
        <begin position="301"/>
        <end position="321"/>
    </location>
</feature>
<feature type="transmembrane region" description="Helical" evidence="1">
    <location>
        <begin position="359"/>
        <end position="379"/>
    </location>
</feature>
<feature type="transmembrane region" description="Helical" evidence="1">
    <location>
        <begin position="405"/>
        <end position="425"/>
    </location>
</feature>
<feature type="transmembrane region" description="Helical" evidence="1">
    <location>
        <begin position="443"/>
        <end position="463"/>
    </location>
</feature>
<feature type="transmembrane region" description="Helical" evidence="1">
    <location>
        <begin position="468"/>
        <end position="488"/>
    </location>
</feature>
<reference key="1">
    <citation type="journal article" date="1996" name="Nucleic Acids Res.">
        <title>Complete sequence analysis of the genome of the bacterium Mycoplasma pneumoniae.</title>
        <authorList>
            <person name="Himmelreich R."/>
            <person name="Hilbert H."/>
            <person name="Plagens H."/>
            <person name="Pirkl E."/>
            <person name="Li B.-C."/>
            <person name="Herrmann R."/>
        </authorList>
    </citation>
    <scope>NUCLEOTIDE SEQUENCE [LARGE SCALE GENOMIC DNA]</scope>
    <source>
        <strain>ATCC 29342 / M129 / Subtype 1</strain>
    </source>
</reference>
<sequence>MSHQEQLHKPNRQQFSEKQFIAFAFNYVAGFGFISVVLTMFKLGPFSYLILGLAALGILGVMLSFSRLSIICGSKAYGGSYLIAKKALGVKTITARFFTFLSGWNVSLTGPFNGLIVPAVLVLSFADIKAVKDNNGALIGLLVGGFVLFGALNFISLFGLKMNKNAILFFAIVKWVVVLGGLILGIYLIGTNHGHGFVENNTLGEHIEDLSFLKVISTTVGMLVAFAGTEDLTAITPDVKSKNIRKCFLLMFGAVTLLYLIGFVIISGISGLNGYGLDGKEKNEKAINTFGSIYFQAGGKYLGIPLLVIFGLGFLLNSLASRLGMTITTARKYVALAQDGFLPSFINEQNKHHEYHKAVWASNIMTLAVMVLMIIVPFLPNDENPGKQLVMFDAISVLVEVAIELAVLISLIQYFITYIFFFMILAKKEGSASVSWWEIASYGVSFAIITVLLFVNLFPITAWKNTNTFKLSILAAFFALGIGFFIHSEIKHKGQLVKSVECN</sequence>
<evidence type="ECO:0000255" key="1"/>
<evidence type="ECO:0000305" key="2"/>
<proteinExistence type="predicted"/>